<gene>
    <name evidence="1" type="primary">pdxH</name>
    <name type="ordered locus">PFL_1283</name>
</gene>
<reference key="1">
    <citation type="journal article" date="2005" name="Nat. Biotechnol.">
        <title>Complete genome sequence of the plant commensal Pseudomonas fluorescens Pf-5.</title>
        <authorList>
            <person name="Paulsen I.T."/>
            <person name="Press C.M."/>
            <person name="Ravel J."/>
            <person name="Kobayashi D.Y."/>
            <person name="Myers G.S.A."/>
            <person name="Mavrodi D.V."/>
            <person name="DeBoy R.T."/>
            <person name="Seshadri R."/>
            <person name="Ren Q."/>
            <person name="Madupu R."/>
            <person name="Dodson R.J."/>
            <person name="Durkin A.S."/>
            <person name="Brinkac L.M."/>
            <person name="Daugherty S.C."/>
            <person name="Sullivan S.A."/>
            <person name="Rosovitz M.J."/>
            <person name="Gwinn M.L."/>
            <person name="Zhou L."/>
            <person name="Schneider D.J."/>
            <person name="Cartinhour S.W."/>
            <person name="Nelson W.C."/>
            <person name="Weidman J."/>
            <person name="Watkins K."/>
            <person name="Tran K."/>
            <person name="Khouri H."/>
            <person name="Pierson E.A."/>
            <person name="Pierson L.S. III"/>
            <person name="Thomashow L.S."/>
            <person name="Loper J.E."/>
        </authorList>
    </citation>
    <scope>NUCLEOTIDE SEQUENCE [LARGE SCALE GENOMIC DNA]</scope>
    <source>
        <strain>ATCC BAA-477 / NRRL B-23932 / Pf-5</strain>
    </source>
</reference>
<sequence>MTQSLADMRRDYTRDGLSEAQAPAEPFALFHQWFADAVKTEQPPVEANAMTVATVDTDGRPHCRILLLKGLDEQGFTFFTNYESAKGQQLAARPFAAMTFFWPTLERQVRIEGRVVKVTPQESDAYYQVRPLGSRLGAWASPQSRVIADRDELQELLKATEARFSDSQPDCPEHWGGYRLLPERIEFWQGRPSRLHDRLNYRLQGQEWVRERLAP</sequence>
<keyword id="KW-0285">Flavoprotein</keyword>
<keyword id="KW-0288">FMN</keyword>
<keyword id="KW-0560">Oxidoreductase</keyword>
<keyword id="KW-0664">Pyridoxine biosynthesis</keyword>
<protein>
    <recommendedName>
        <fullName evidence="1">Pyridoxine/pyridoxamine 5'-phosphate oxidase</fullName>
        <ecNumber evidence="1">1.4.3.5</ecNumber>
    </recommendedName>
    <alternativeName>
        <fullName evidence="1">PNP/PMP oxidase</fullName>
        <shortName evidence="1">PNPOx</shortName>
    </alternativeName>
    <alternativeName>
        <fullName evidence="1">Pyridoxal 5'-phosphate synthase</fullName>
    </alternativeName>
</protein>
<dbReference type="EC" id="1.4.3.5" evidence="1"/>
<dbReference type="EMBL" id="CP000076">
    <property type="protein sequence ID" value="AAY90568.1"/>
    <property type="molecule type" value="Genomic_DNA"/>
</dbReference>
<dbReference type="RefSeq" id="WP_011059625.1">
    <property type="nucleotide sequence ID" value="NC_004129.6"/>
</dbReference>
<dbReference type="SMR" id="Q4KH71"/>
<dbReference type="STRING" id="220664.PFL_1283"/>
<dbReference type="GeneID" id="57474303"/>
<dbReference type="KEGG" id="pfl:PFL_1283"/>
<dbReference type="PATRIC" id="fig|220664.5.peg.1314"/>
<dbReference type="eggNOG" id="COG0259">
    <property type="taxonomic scope" value="Bacteria"/>
</dbReference>
<dbReference type="HOGENOM" id="CLU_032263_2_2_6"/>
<dbReference type="UniPathway" id="UPA01068">
    <property type="reaction ID" value="UER00304"/>
</dbReference>
<dbReference type="UniPathway" id="UPA01068">
    <property type="reaction ID" value="UER00305"/>
</dbReference>
<dbReference type="Proteomes" id="UP000008540">
    <property type="component" value="Chromosome"/>
</dbReference>
<dbReference type="GO" id="GO:0010181">
    <property type="term" value="F:FMN binding"/>
    <property type="evidence" value="ECO:0007669"/>
    <property type="project" value="UniProtKB-UniRule"/>
</dbReference>
<dbReference type="GO" id="GO:0004733">
    <property type="term" value="F:pyridoxamine phosphate oxidase activity"/>
    <property type="evidence" value="ECO:0007669"/>
    <property type="project" value="UniProtKB-UniRule"/>
</dbReference>
<dbReference type="GO" id="GO:0008615">
    <property type="term" value="P:pyridoxine biosynthetic process"/>
    <property type="evidence" value="ECO:0007669"/>
    <property type="project" value="UniProtKB-KW"/>
</dbReference>
<dbReference type="FunFam" id="2.30.110.10:FF:000011">
    <property type="entry name" value="Chromosome 7, whole genome shotgun sequence"/>
    <property type="match status" value="1"/>
</dbReference>
<dbReference type="Gene3D" id="2.30.110.10">
    <property type="entry name" value="Electron Transport, Fmn-binding Protein, Chain A"/>
    <property type="match status" value="1"/>
</dbReference>
<dbReference type="HAMAP" id="MF_01629">
    <property type="entry name" value="PdxH"/>
    <property type="match status" value="1"/>
</dbReference>
<dbReference type="InterPro" id="IPR000659">
    <property type="entry name" value="Pyridox_Oxase"/>
</dbReference>
<dbReference type="InterPro" id="IPR019740">
    <property type="entry name" value="Pyridox_Oxase_CS"/>
</dbReference>
<dbReference type="InterPro" id="IPR011576">
    <property type="entry name" value="Pyridox_Oxase_N"/>
</dbReference>
<dbReference type="InterPro" id="IPR019576">
    <property type="entry name" value="Pyridoxamine_oxidase_dimer_C"/>
</dbReference>
<dbReference type="InterPro" id="IPR012349">
    <property type="entry name" value="Split_barrel_FMN-bd"/>
</dbReference>
<dbReference type="NCBIfam" id="TIGR00558">
    <property type="entry name" value="pdxH"/>
    <property type="match status" value="1"/>
</dbReference>
<dbReference type="NCBIfam" id="NF004231">
    <property type="entry name" value="PRK05679.1"/>
    <property type="match status" value="1"/>
</dbReference>
<dbReference type="PANTHER" id="PTHR10851:SF0">
    <property type="entry name" value="PYRIDOXINE-5'-PHOSPHATE OXIDASE"/>
    <property type="match status" value="1"/>
</dbReference>
<dbReference type="PANTHER" id="PTHR10851">
    <property type="entry name" value="PYRIDOXINE-5-PHOSPHATE OXIDASE"/>
    <property type="match status" value="1"/>
</dbReference>
<dbReference type="Pfam" id="PF10590">
    <property type="entry name" value="PNP_phzG_C"/>
    <property type="match status" value="1"/>
</dbReference>
<dbReference type="Pfam" id="PF01243">
    <property type="entry name" value="PNPOx_N"/>
    <property type="match status" value="1"/>
</dbReference>
<dbReference type="PIRSF" id="PIRSF000190">
    <property type="entry name" value="Pyd_amn-ph_oxd"/>
    <property type="match status" value="1"/>
</dbReference>
<dbReference type="SUPFAM" id="SSF50475">
    <property type="entry name" value="FMN-binding split barrel"/>
    <property type="match status" value="1"/>
</dbReference>
<dbReference type="PROSITE" id="PS01064">
    <property type="entry name" value="PYRIDOX_OXIDASE"/>
    <property type="match status" value="1"/>
</dbReference>
<proteinExistence type="inferred from homology"/>
<organism>
    <name type="scientific">Pseudomonas fluorescens (strain ATCC BAA-477 / NRRL B-23932 / Pf-5)</name>
    <dbReference type="NCBI Taxonomy" id="220664"/>
    <lineage>
        <taxon>Bacteria</taxon>
        <taxon>Pseudomonadati</taxon>
        <taxon>Pseudomonadota</taxon>
        <taxon>Gammaproteobacteria</taxon>
        <taxon>Pseudomonadales</taxon>
        <taxon>Pseudomonadaceae</taxon>
        <taxon>Pseudomonas</taxon>
    </lineage>
</organism>
<feature type="chain" id="PRO_0000167737" description="Pyridoxine/pyridoxamine 5'-phosphate oxidase">
    <location>
        <begin position="1"/>
        <end position="215"/>
    </location>
</feature>
<feature type="binding site" evidence="1">
    <location>
        <begin position="9"/>
        <end position="12"/>
    </location>
    <ligand>
        <name>substrate</name>
    </ligand>
</feature>
<feature type="binding site" evidence="1">
    <location>
        <begin position="64"/>
        <end position="69"/>
    </location>
    <ligand>
        <name>FMN</name>
        <dbReference type="ChEBI" id="CHEBI:58210"/>
    </ligand>
</feature>
<feature type="binding site" evidence="1">
    <location>
        <position position="69"/>
    </location>
    <ligand>
        <name>substrate</name>
    </ligand>
</feature>
<feature type="binding site" evidence="1">
    <location>
        <begin position="79"/>
        <end position="80"/>
    </location>
    <ligand>
        <name>FMN</name>
        <dbReference type="ChEBI" id="CHEBI:58210"/>
    </ligand>
</feature>
<feature type="binding site" evidence="1">
    <location>
        <position position="86"/>
    </location>
    <ligand>
        <name>FMN</name>
        <dbReference type="ChEBI" id="CHEBI:58210"/>
    </ligand>
</feature>
<feature type="binding site" evidence="1">
    <location>
        <position position="108"/>
    </location>
    <ligand>
        <name>FMN</name>
        <dbReference type="ChEBI" id="CHEBI:58210"/>
    </ligand>
</feature>
<feature type="binding site" evidence="1">
    <location>
        <position position="126"/>
    </location>
    <ligand>
        <name>substrate</name>
    </ligand>
</feature>
<feature type="binding site" evidence="1">
    <location>
        <position position="130"/>
    </location>
    <ligand>
        <name>substrate</name>
    </ligand>
</feature>
<feature type="binding site" evidence="1">
    <location>
        <position position="134"/>
    </location>
    <ligand>
        <name>substrate</name>
    </ligand>
</feature>
<feature type="binding site" evidence="1">
    <location>
        <begin position="143"/>
        <end position="144"/>
    </location>
    <ligand>
        <name>FMN</name>
        <dbReference type="ChEBI" id="CHEBI:58210"/>
    </ligand>
</feature>
<feature type="binding site" evidence="1">
    <location>
        <position position="188"/>
    </location>
    <ligand>
        <name>FMN</name>
        <dbReference type="ChEBI" id="CHEBI:58210"/>
    </ligand>
</feature>
<feature type="binding site" evidence="1">
    <location>
        <begin position="194"/>
        <end position="196"/>
    </location>
    <ligand>
        <name>substrate</name>
    </ligand>
</feature>
<feature type="binding site" evidence="1">
    <location>
        <position position="198"/>
    </location>
    <ligand>
        <name>FMN</name>
        <dbReference type="ChEBI" id="CHEBI:58210"/>
    </ligand>
</feature>
<name>PDXH_PSEF5</name>
<comment type="function">
    <text evidence="1">Catalyzes the oxidation of either pyridoxine 5'-phosphate (PNP) or pyridoxamine 5'-phosphate (PMP) into pyridoxal 5'-phosphate (PLP).</text>
</comment>
<comment type="catalytic activity">
    <reaction evidence="1">
        <text>pyridoxamine 5'-phosphate + O2 + H2O = pyridoxal 5'-phosphate + H2O2 + NH4(+)</text>
        <dbReference type="Rhea" id="RHEA:15817"/>
        <dbReference type="ChEBI" id="CHEBI:15377"/>
        <dbReference type="ChEBI" id="CHEBI:15379"/>
        <dbReference type="ChEBI" id="CHEBI:16240"/>
        <dbReference type="ChEBI" id="CHEBI:28938"/>
        <dbReference type="ChEBI" id="CHEBI:58451"/>
        <dbReference type="ChEBI" id="CHEBI:597326"/>
        <dbReference type="EC" id="1.4.3.5"/>
    </reaction>
</comment>
<comment type="catalytic activity">
    <reaction evidence="1">
        <text>pyridoxine 5'-phosphate + O2 = pyridoxal 5'-phosphate + H2O2</text>
        <dbReference type="Rhea" id="RHEA:15149"/>
        <dbReference type="ChEBI" id="CHEBI:15379"/>
        <dbReference type="ChEBI" id="CHEBI:16240"/>
        <dbReference type="ChEBI" id="CHEBI:58589"/>
        <dbReference type="ChEBI" id="CHEBI:597326"/>
        <dbReference type="EC" id="1.4.3.5"/>
    </reaction>
</comment>
<comment type="cofactor">
    <cofactor evidence="1">
        <name>FMN</name>
        <dbReference type="ChEBI" id="CHEBI:58210"/>
    </cofactor>
    <text evidence="1">Binds 1 FMN per subunit.</text>
</comment>
<comment type="pathway">
    <text evidence="1">Cofactor metabolism; pyridoxal 5'-phosphate salvage; pyridoxal 5'-phosphate from pyridoxamine 5'-phosphate: step 1/1.</text>
</comment>
<comment type="pathway">
    <text evidence="1">Cofactor metabolism; pyridoxal 5'-phosphate salvage; pyridoxal 5'-phosphate from pyridoxine 5'-phosphate: step 1/1.</text>
</comment>
<comment type="subunit">
    <text evidence="1">Homodimer.</text>
</comment>
<comment type="similarity">
    <text evidence="1">Belongs to the pyridoxamine 5'-phosphate oxidase family.</text>
</comment>
<evidence type="ECO:0000255" key="1">
    <source>
        <dbReference type="HAMAP-Rule" id="MF_01629"/>
    </source>
</evidence>
<accession>Q4KH71</accession>